<accession>Q98KB4</accession>
<keyword id="KW-0067">ATP-binding</keyword>
<keyword id="KW-0131">Cell cycle</keyword>
<keyword id="KW-0132">Cell division</keyword>
<keyword id="KW-0133">Cell shape</keyword>
<keyword id="KW-0961">Cell wall biogenesis/degradation</keyword>
<keyword id="KW-0963">Cytoplasm</keyword>
<keyword id="KW-0436">Ligase</keyword>
<keyword id="KW-0547">Nucleotide-binding</keyword>
<keyword id="KW-0573">Peptidoglycan synthesis</keyword>
<name>MURC_RHILO</name>
<reference key="1">
    <citation type="journal article" date="2000" name="DNA Res.">
        <title>Complete genome structure of the nitrogen-fixing symbiotic bacterium Mesorhizobium loti.</title>
        <authorList>
            <person name="Kaneko T."/>
            <person name="Nakamura Y."/>
            <person name="Sato S."/>
            <person name="Asamizu E."/>
            <person name="Kato T."/>
            <person name="Sasamoto S."/>
            <person name="Watanabe A."/>
            <person name="Idesawa K."/>
            <person name="Ishikawa A."/>
            <person name="Kawashima K."/>
            <person name="Kimura T."/>
            <person name="Kishida Y."/>
            <person name="Kiyokawa C."/>
            <person name="Kohara M."/>
            <person name="Matsumoto M."/>
            <person name="Matsuno A."/>
            <person name="Mochizuki Y."/>
            <person name="Nakayama S."/>
            <person name="Nakazaki N."/>
            <person name="Shimpo S."/>
            <person name="Sugimoto M."/>
            <person name="Takeuchi C."/>
            <person name="Yamada M."/>
            <person name="Tabata S."/>
        </authorList>
    </citation>
    <scope>NUCLEOTIDE SEQUENCE [LARGE SCALE GENOMIC DNA]</scope>
    <source>
        <strain>LMG 29417 / CECT 9101 / MAFF 303099</strain>
    </source>
</reference>
<feature type="chain" id="PRO_0000182139" description="UDP-N-acetylmuramate--L-alanine ligase">
    <location>
        <begin position="1"/>
        <end position="466"/>
    </location>
</feature>
<feature type="binding site" evidence="1">
    <location>
        <begin position="114"/>
        <end position="120"/>
    </location>
    <ligand>
        <name>ATP</name>
        <dbReference type="ChEBI" id="CHEBI:30616"/>
    </ligand>
</feature>
<evidence type="ECO:0000255" key="1">
    <source>
        <dbReference type="HAMAP-Rule" id="MF_00046"/>
    </source>
</evidence>
<organism>
    <name type="scientific">Mesorhizobium japonicum (strain LMG 29417 / CECT 9101 / MAFF 303099)</name>
    <name type="common">Mesorhizobium loti (strain MAFF 303099)</name>
    <dbReference type="NCBI Taxonomy" id="266835"/>
    <lineage>
        <taxon>Bacteria</taxon>
        <taxon>Pseudomonadati</taxon>
        <taxon>Pseudomonadota</taxon>
        <taxon>Alphaproteobacteria</taxon>
        <taxon>Hyphomicrobiales</taxon>
        <taxon>Phyllobacteriaceae</taxon>
        <taxon>Mesorhizobium</taxon>
    </lineage>
</organism>
<proteinExistence type="inferred from homology"/>
<dbReference type="EC" id="6.3.2.8" evidence="1"/>
<dbReference type="EMBL" id="BA000012">
    <property type="protein sequence ID" value="BAB48900.1"/>
    <property type="molecule type" value="Genomic_DNA"/>
</dbReference>
<dbReference type="RefSeq" id="WP_010910253.1">
    <property type="nucleotide sequence ID" value="NC_002678.2"/>
</dbReference>
<dbReference type="SMR" id="Q98KB4"/>
<dbReference type="GeneID" id="66683340"/>
<dbReference type="KEGG" id="mlo:mll1553"/>
<dbReference type="eggNOG" id="COG0773">
    <property type="taxonomic scope" value="Bacteria"/>
</dbReference>
<dbReference type="HOGENOM" id="CLU_028104_2_2_5"/>
<dbReference type="UniPathway" id="UPA00219"/>
<dbReference type="Proteomes" id="UP000000552">
    <property type="component" value="Chromosome"/>
</dbReference>
<dbReference type="GO" id="GO:0005737">
    <property type="term" value="C:cytoplasm"/>
    <property type="evidence" value="ECO:0007669"/>
    <property type="project" value="UniProtKB-SubCell"/>
</dbReference>
<dbReference type="GO" id="GO:0005524">
    <property type="term" value="F:ATP binding"/>
    <property type="evidence" value="ECO:0007669"/>
    <property type="project" value="UniProtKB-UniRule"/>
</dbReference>
<dbReference type="GO" id="GO:0008763">
    <property type="term" value="F:UDP-N-acetylmuramate-L-alanine ligase activity"/>
    <property type="evidence" value="ECO:0007669"/>
    <property type="project" value="UniProtKB-UniRule"/>
</dbReference>
<dbReference type="GO" id="GO:0051301">
    <property type="term" value="P:cell division"/>
    <property type="evidence" value="ECO:0007669"/>
    <property type="project" value="UniProtKB-KW"/>
</dbReference>
<dbReference type="GO" id="GO:0071555">
    <property type="term" value="P:cell wall organization"/>
    <property type="evidence" value="ECO:0007669"/>
    <property type="project" value="UniProtKB-KW"/>
</dbReference>
<dbReference type="GO" id="GO:0009252">
    <property type="term" value="P:peptidoglycan biosynthetic process"/>
    <property type="evidence" value="ECO:0007669"/>
    <property type="project" value="UniProtKB-UniRule"/>
</dbReference>
<dbReference type="GO" id="GO:0008360">
    <property type="term" value="P:regulation of cell shape"/>
    <property type="evidence" value="ECO:0007669"/>
    <property type="project" value="UniProtKB-KW"/>
</dbReference>
<dbReference type="Gene3D" id="3.90.190.20">
    <property type="entry name" value="Mur ligase, C-terminal domain"/>
    <property type="match status" value="1"/>
</dbReference>
<dbReference type="Gene3D" id="3.40.1190.10">
    <property type="entry name" value="Mur-like, catalytic domain"/>
    <property type="match status" value="1"/>
</dbReference>
<dbReference type="Gene3D" id="3.40.50.720">
    <property type="entry name" value="NAD(P)-binding Rossmann-like Domain"/>
    <property type="match status" value="1"/>
</dbReference>
<dbReference type="HAMAP" id="MF_00046">
    <property type="entry name" value="MurC"/>
    <property type="match status" value="1"/>
</dbReference>
<dbReference type="InterPro" id="IPR036565">
    <property type="entry name" value="Mur-like_cat_sf"/>
</dbReference>
<dbReference type="InterPro" id="IPR004101">
    <property type="entry name" value="Mur_ligase_C"/>
</dbReference>
<dbReference type="InterPro" id="IPR036615">
    <property type="entry name" value="Mur_ligase_C_dom_sf"/>
</dbReference>
<dbReference type="InterPro" id="IPR013221">
    <property type="entry name" value="Mur_ligase_cen"/>
</dbReference>
<dbReference type="InterPro" id="IPR000713">
    <property type="entry name" value="Mur_ligase_N"/>
</dbReference>
<dbReference type="InterPro" id="IPR050061">
    <property type="entry name" value="MurCDEF_pg_biosynth"/>
</dbReference>
<dbReference type="InterPro" id="IPR005758">
    <property type="entry name" value="UDP-N-AcMur_Ala_ligase_MurC"/>
</dbReference>
<dbReference type="NCBIfam" id="TIGR01082">
    <property type="entry name" value="murC"/>
    <property type="match status" value="1"/>
</dbReference>
<dbReference type="PANTHER" id="PTHR43445:SF3">
    <property type="entry name" value="UDP-N-ACETYLMURAMATE--L-ALANINE LIGASE"/>
    <property type="match status" value="1"/>
</dbReference>
<dbReference type="PANTHER" id="PTHR43445">
    <property type="entry name" value="UDP-N-ACETYLMURAMATE--L-ALANINE LIGASE-RELATED"/>
    <property type="match status" value="1"/>
</dbReference>
<dbReference type="Pfam" id="PF01225">
    <property type="entry name" value="Mur_ligase"/>
    <property type="match status" value="1"/>
</dbReference>
<dbReference type="Pfam" id="PF02875">
    <property type="entry name" value="Mur_ligase_C"/>
    <property type="match status" value="1"/>
</dbReference>
<dbReference type="Pfam" id="PF08245">
    <property type="entry name" value="Mur_ligase_M"/>
    <property type="match status" value="1"/>
</dbReference>
<dbReference type="SUPFAM" id="SSF51984">
    <property type="entry name" value="MurCD N-terminal domain"/>
    <property type="match status" value="1"/>
</dbReference>
<dbReference type="SUPFAM" id="SSF53623">
    <property type="entry name" value="MurD-like peptide ligases, catalytic domain"/>
    <property type="match status" value="1"/>
</dbReference>
<dbReference type="SUPFAM" id="SSF53244">
    <property type="entry name" value="MurD-like peptide ligases, peptide-binding domain"/>
    <property type="match status" value="1"/>
</dbReference>
<comment type="function">
    <text evidence="1">Cell wall formation.</text>
</comment>
<comment type="catalytic activity">
    <reaction evidence="1">
        <text>UDP-N-acetyl-alpha-D-muramate + L-alanine + ATP = UDP-N-acetyl-alpha-D-muramoyl-L-alanine + ADP + phosphate + H(+)</text>
        <dbReference type="Rhea" id="RHEA:23372"/>
        <dbReference type="ChEBI" id="CHEBI:15378"/>
        <dbReference type="ChEBI" id="CHEBI:30616"/>
        <dbReference type="ChEBI" id="CHEBI:43474"/>
        <dbReference type="ChEBI" id="CHEBI:57972"/>
        <dbReference type="ChEBI" id="CHEBI:70757"/>
        <dbReference type="ChEBI" id="CHEBI:83898"/>
        <dbReference type="ChEBI" id="CHEBI:456216"/>
        <dbReference type="EC" id="6.3.2.8"/>
    </reaction>
</comment>
<comment type="pathway">
    <text evidence="1">Cell wall biogenesis; peptidoglycan biosynthesis.</text>
</comment>
<comment type="subcellular location">
    <subcellularLocation>
        <location evidence="1">Cytoplasm</location>
    </subcellularLocation>
</comment>
<comment type="similarity">
    <text evidence="1">Belongs to the MurCDEF family.</text>
</comment>
<sequence>MKMPQTIGLVHFIGIGGIGMSGIAEVLHNLGYKVQGSDQADSANVQRLRDKGIECFVGHKAENLGDAEVVVVSTAIKKTNPELKAAREKLLPIVRRAEMLAELMRFRQAVAIGGTHGKTTTTSMVATLLEAGGLDPTVINGGIINAYGTNARMGDGEWMVVEADESDGTFLKLPADIAVVTNIDPEHLDHYGSFDKVREAFRQFVENVPFYGFGVMCTDHPEVQALVGRIEDRRVITYGENAQADVRFTNHRMAGATSEFDVVIRDRKTGSQSTISGLRLPMPGRHNVSNATAAIAVAHELGLSGEAIKKGLSSFAGVKRRFTHTGSWNGVDVFDDYGHHPVEISAVLKAARSATKGRVIAIAQPHRFTRLHDLFNEFSACFNDADTVIVAPVYAAGEDPIDGVSSDELVSRIRAGGHRDARYIEGPTAIAPIIRGLAKPGDFVVFLGAGNITQWAYALPKELAAS</sequence>
<protein>
    <recommendedName>
        <fullName evidence="1">UDP-N-acetylmuramate--L-alanine ligase</fullName>
        <ecNumber evidence="1">6.3.2.8</ecNumber>
    </recommendedName>
    <alternativeName>
        <fullName evidence="1">UDP-N-acetylmuramoyl-L-alanine synthetase</fullName>
    </alternativeName>
</protein>
<gene>
    <name evidence="1" type="primary">murC</name>
    <name type="ordered locus">mll1553</name>
</gene>